<keyword id="KW-0235">DNA replication</keyword>
<keyword id="KW-0238">DNA-binding</keyword>
<keyword id="KW-0240">DNA-directed RNA polymerase</keyword>
<keyword id="KW-0460">Magnesium</keyword>
<keyword id="KW-0479">Metal-binding</keyword>
<keyword id="KW-0548">Nucleotidyltransferase</keyword>
<keyword id="KW-0639">Primosome</keyword>
<keyword id="KW-1185">Reference proteome</keyword>
<keyword id="KW-0804">Transcription</keyword>
<keyword id="KW-0808">Transferase</keyword>
<keyword id="KW-0862">Zinc</keyword>
<keyword id="KW-0863">Zinc-finger</keyword>
<comment type="function">
    <text evidence="1">RNA polymerase that catalyzes the synthesis of short RNA molecules used as primers for DNA polymerase during DNA replication.</text>
</comment>
<comment type="catalytic activity">
    <reaction evidence="1">
        <text>ssDNA + n NTP = ssDNA/pppN(pN)n-1 hybrid + (n-1) diphosphate.</text>
        <dbReference type="EC" id="2.7.7.101"/>
    </reaction>
</comment>
<comment type="cofactor">
    <cofactor evidence="1">
        <name>Zn(2+)</name>
        <dbReference type="ChEBI" id="CHEBI:29105"/>
    </cofactor>
    <text evidence="1">Binds 1 zinc ion per monomer.</text>
</comment>
<comment type="cofactor">
    <cofactor evidence="1">
        <name>Mg(2+)</name>
        <dbReference type="ChEBI" id="CHEBI:18420"/>
    </cofactor>
    <text evidence="1">Binds two Mg(2+) per subunit.</text>
</comment>
<comment type="subunit">
    <text evidence="1">Monomer. Interacts with DnaB.</text>
</comment>
<comment type="domain">
    <text evidence="1">Contains an N-terminal zinc-binding domain, a central core domain that contains the primase activity, and a C-terminal DnaB-binding domain.</text>
</comment>
<comment type="similarity">
    <text evidence="1">Belongs to the DnaG primase family.</text>
</comment>
<reference key="1">
    <citation type="journal article" date="2002" name="Environ. Microbiol.">
        <title>Complete genome sequence and comparative analysis of the metabolically versatile Pseudomonas putida KT2440.</title>
        <authorList>
            <person name="Nelson K.E."/>
            <person name="Weinel C."/>
            <person name="Paulsen I.T."/>
            <person name="Dodson R.J."/>
            <person name="Hilbert H."/>
            <person name="Martins dos Santos V.A.P."/>
            <person name="Fouts D.E."/>
            <person name="Gill S.R."/>
            <person name="Pop M."/>
            <person name="Holmes M."/>
            <person name="Brinkac L.M."/>
            <person name="Beanan M.J."/>
            <person name="DeBoy R.T."/>
            <person name="Daugherty S.C."/>
            <person name="Kolonay J.F."/>
            <person name="Madupu R."/>
            <person name="Nelson W.C."/>
            <person name="White O."/>
            <person name="Peterson J.D."/>
            <person name="Khouri H.M."/>
            <person name="Hance I."/>
            <person name="Chris Lee P."/>
            <person name="Holtzapple E.K."/>
            <person name="Scanlan D."/>
            <person name="Tran K."/>
            <person name="Moazzez A."/>
            <person name="Utterback T.R."/>
            <person name="Rizzo M."/>
            <person name="Lee K."/>
            <person name="Kosack D."/>
            <person name="Moestl D."/>
            <person name="Wedler H."/>
            <person name="Lauber J."/>
            <person name="Stjepandic D."/>
            <person name="Hoheisel J."/>
            <person name="Straetz M."/>
            <person name="Heim S."/>
            <person name="Kiewitz C."/>
            <person name="Eisen J.A."/>
            <person name="Timmis K.N."/>
            <person name="Duesterhoeft A."/>
            <person name="Tuemmler B."/>
            <person name="Fraser C.M."/>
        </authorList>
    </citation>
    <scope>NUCLEOTIDE SEQUENCE [LARGE SCALE GENOMIC DNA]</scope>
    <source>
        <strain>ATCC 47054 / DSM 6125 / CFBP 8728 / NCIMB 11950 / KT2440</strain>
    </source>
</reference>
<proteinExistence type="inferred from homology"/>
<gene>
    <name evidence="1" type="primary">dnaG</name>
    <name type="ordered locus">PP_0388</name>
</gene>
<evidence type="ECO:0000255" key="1">
    <source>
        <dbReference type="HAMAP-Rule" id="MF_00974"/>
    </source>
</evidence>
<evidence type="ECO:0000256" key="2">
    <source>
        <dbReference type="SAM" id="MobiDB-lite"/>
    </source>
</evidence>
<sequence length="660" mass="73830">MAGLIPQSFIDDLINRLDIVDVVSSRVQLKKTGKNYSACCPFHKEKTPSFTVSPDKQFYYCFGCGAGGNALGFVMDHDNLDFPQAVEELARAAGMEVPREQGRRDQKPRQPTDSPLYPLLDAASEFYRQALRSHPSRKAAVDYLKGRGLSGEIARDFGLGFAPPGWDNLLKHLGADTLQQKVMIDAGLLIENAESGKRYDRFRDRVMFPIRDSRGRIIAFGGRVLGDDKPKYLNSPETPVFHKGQELYGLYEARKHNRNLDEIIVVEGYMDVIALAQQGLRNAVATLGTATSEEHLKRLFRVVPSVLFCFDGDQAGRKAAWRALESTLSNLQDGRRARFLFLPEGEDPDSLVRAEGTDAFMARINQHSQPLADYFFEQLGVEADPRSLEGKAHMATLAAPLIEKIPGANLRQLMRNRLKEITGLDPQQVEQLAQQAPATSSMPDYDPGYDYDAMASYTPDYGDMPQHDYAPVHQEQAWKPNKGGSKKPWSDKPWDKNRKGGKPWQQRDEAPPRVPAPVEPPTLAALRTLLHHPLLAGKVEDASHFADEEHLYSQLLVALIEAAQKNPGLSSMQLIARWHGTEQGRLLRALAEKEWLIVADNLEQQFFDTITSLSARQRERSLEQLLRKSRQSELTSEEKTQLLALLSRNVPAQTPTSSGA</sequence>
<organism>
    <name type="scientific">Pseudomonas putida (strain ATCC 47054 / DSM 6125 / CFBP 8728 / NCIMB 11950 / KT2440)</name>
    <dbReference type="NCBI Taxonomy" id="160488"/>
    <lineage>
        <taxon>Bacteria</taxon>
        <taxon>Pseudomonadati</taxon>
        <taxon>Pseudomonadota</taxon>
        <taxon>Gammaproteobacteria</taxon>
        <taxon>Pseudomonadales</taxon>
        <taxon>Pseudomonadaceae</taxon>
        <taxon>Pseudomonas</taxon>
    </lineage>
</organism>
<feature type="chain" id="PRO_0000180513" description="DNA primase">
    <location>
        <begin position="1"/>
        <end position="660"/>
    </location>
</feature>
<feature type="domain" description="Toprim" evidence="1">
    <location>
        <begin position="261"/>
        <end position="343"/>
    </location>
</feature>
<feature type="zinc finger region" description="CHC2-type" evidence="1">
    <location>
        <begin position="40"/>
        <end position="64"/>
    </location>
</feature>
<feature type="region of interest" description="Disordered" evidence="2">
    <location>
        <begin position="94"/>
        <end position="115"/>
    </location>
</feature>
<feature type="region of interest" description="Disordered" evidence="2">
    <location>
        <begin position="425"/>
        <end position="449"/>
    </location>
</feature>
<feature type="region of interest" description="Disordered" evidence="2">
    <location>
        <begin position="476"/>
        <end position="519"/>
    </location>
</feature>
<feature type="compositionally biased region" description="Basic and acidic residues" evidence="2">
    <location>
        <begin position="97"/>
        <end position="110"/>
    </location>
</feature>
<feature type="compositionally biased region" description="Polar residues" evidence="2">
    <location>
        <begin position="428"/>
        <end position="442"/>
    </location>
</feature>
<feature type="compositionally biased region" description="Basic and acidic residues" evidence="2">
    <location>
        <begin position="488"/>
        <end position="498"/>
    </location>
</feature>
<feature type="binding site" evidence="1">
    <location>
        <position position="267"/>
    </location>
    <ligand>
        <name>Mg(2+)</name>
        <dbReference type="ChEBI" id="CHEBI:18420"/>
        <label>1</label>
        <note>catalytic</note>
    </ligand>
</feature>
<feature type="binding site" evidence="1">
    <location>
        <position position="311"/>
    </location>
    <ligand>
        <name>Mg(2+)</name>
        <dbReference type="ChEBI" id="CHEBI:18420"/>
        <label>1</label>
        <note>catalytic</note>
    </ligand>
</feature>
<feature type="binding site" evidence="1">
    <location>
        <position position="311"/>
    </location>
    <ligand>
        <name>Mg(2+)</name>
        <dbReference type="ChEBI" id="CHEBI:18420"/>
        <label>2</label>
    </ligand>
</feature>
<feature type="binding site" evidence="1">
    <location>
        <position position="313"/>
    </location>
    <ligand>
        <name>Mg(2+)</name>
        <dbReference type="ChEBI" id="CHEBI:18420"/>
        <label>2</label>
    </ligand>
</feature>
<name>DNAG_PSEPK</name>
<protein>
    <recommendedName>
        <fullName evidence="1">DNA primase</fullName>
        <ecNumber evidence="1">2.7.7.101</ecNumber>
    </recommendedName>
</protein>
<accession>P0A118</accession>
<accession>O33470</accession>
<dbReference type="EC" id="2.7.7.101" evidence="1"/>
<dbReference type="EMBL" id="AE015451">
    <property type="protein sequence ID" value="AAN66019.1"/>
    <property type="molecule type" value="Genomic_DNA"/>
</dbReference>
<dbReference type="RefSeq" id="NP_742555.1">
    <property type="nucleotide sequence ID" value="NC_002947.4"/>
</dbReference>
<dbReference type="RefSeq" id="WP_010951735.1">
    <property type="nucleotide sequence ID" value="NZ_CP169744.1"/>
</dbReference>
<dbReference type="SMR" id="P0A118"/>
<dbReference type="STRING" id="160488.PP_0388"/>
<dbReference type="PaxDb" id="160488-PP_0388"/>
<dbReference type="GeneID" id="83677679"/>
<dbReference type="KEGG" id="ppu:PP_0388"/>
<dbReference type="PATRIC" id="fig|160488.4.peg.418"/>
<dbReference type="eggNOG" id="COG0358">
    <property type="taxonomic scope" value="Bacteria"/>
</dbReference>
<dbReference type="HOGENOM" id="CLU_013501_5_4_6"/>
<dbReference type="OrthoDB" id="9803773at2"/>
<dbReference type="PhylomeDB" id="P0A118"/>
<dbReference type="BioCyc" id="PPUT160488:G1G01-425-MONOMER"/>
<dbReference type="Proteomes" id="UP000000556">
    <property type="component" value="Chromosome"/>
</dbReference>
<dbReference type="GO" id="GO:0005737">
    <property type="term" value="C:cytoplasm"/>
    <property type="evidence" value="ECO:0007669"/>
    <property type="project" value="TreeGrafter"/>
</dbReference>
<dbReference type="GO" id="GO:0000428">
    <property type="term" value="C:DNA-directed RNA polymerase complex"/>
    <property type="evidence" value="ECO:0007669"/>
    <property type="project" value="UniProtKB-KW"/>
</dbReference>
<dbReference type="GO" id="GO:1990077">
    <property type="term" value="C:primosome complex"/>
    <property type="evidence" value="ECO:0007669"/>
    <property type="project" value="UniProtKB-KW"/>
</dbReference>
<dbReference type="GO" id="GO:0003677">
    <property type="term" value="F:DNA binding"/>
    <property type="evidence" value="ECO:0007669"/>
    <property type="project" value="UniProtKB-KW"/>
</dbReference>
<dbReference type="GO" id="GO:0003899">
    <property type="term" value="F:DNA-directed RNA polymerase activity"/>
    <property type="evidence" value="ECO:0007669"/>
    <property type="project" value="InterPro"/>
</dbReference>
<dbReference type="GO" id="GO:0008270">
    <property type="term" value="F:zinc ion binding"/>
    <property type="evidence" value="ECO:0007669"/>
    <property type="project" value="UniProtKB-UniRule"/>
</dbReference>
<dbReference type="GO" id="GO:0006269">
    <property type="term" value="P:DNA replication, synthesis of primer"/>
    <property type="evidence" value="ECO:0007669"/>
    <property type="project" value="UniProtKB-UniRule"/>
</dbReference>
<dbReference type="CDD" id="cd03364">
    <property type="entry name" value="TOPRIM_DnaG_primases"/>
    <property type="match status" value="1"/>
</dbReference>
<dbReference type="FunFam" id="3.40.1360.10:FF:000002">
    <property type="entry name" value="DNA primase"/>
    <property type="match status" value="1"/>
</dbReference>
<dbReference type="FunFam" id="3.90.580.10:FF:000001">
    <property type="entry name" value="DNA primase"/>
    <property type="match status" value="1"/>
</dbReference>
<dbReference type="FunFam" id="3.90.980.10:FF:000001">
    <property type="entry name" value="DNA primase"/>
    <property type="match status" value="1"/>
</dbReference>
<dbReference type="Gene3D" id="3.40.1360.10">
    <property type="match status" value="1"/>
</dbReference>
<dbReference type="Gene3D" id="3.90.980.10">
    <property type="entry name" value="DNA primase, catalytic core, N-terminal domain"/>
    <property type="match status" value="1"/>
</dbReference>
<dbReference type="Gene3D" id="1.10.860.10">
    <property type="entry name" value="DNAb Helicase, Chain A"/>
    <property type="match status" value="1"/>
</dbReference>
<dbReference type="Gene3D" id="1.20.50.20">
    <property type="entry name" value="DnaG, RNA polymerase domain, helical bundle"/>
    <property type="match status" value="1"/>
</dbReference>
<dbReference type="Gene3D" id="3.90.580.10">
    <property type="entry name" value="Zinc finger, CHC2-type domain"/>
    <property type="match status" value="1"/>
</dbReference>
<dbReference type="HAMAP" id="MF_00974">
    <property type="entry name" value="DNA_primase_DnaG"/>
    <property type="match status" value="1"/>
</dbReference>
<dbReference type="InterPro" id="IPR016136">
    <property type="entry name" value="DNA_helicase_N/primase_C"/>
</dbReference>
<dbReference type="InterPro" id="IPR037068">
    <property type="entry name" value="DNA_primase_core_N_sf"/>
</dbReference>
<dbReference type="InterPro" id="IPR019475">
    <property type="entry name" value="DNA_primase_DnaB-bd"/>
</dbReference>
<dbReference type="InterPro" id="IPR006295">
    <property type="entry name" value="DNA_primase_DnaG"/>
</dbReference>
<dbReference type="InterPro" id="IPR013173">
    <property type="entry name" value="DNA_primase_DnaG_DnaB-bd_dom"/>
</dbReference>
<dbReference type="InterPro" id="IPR036977">
    <property type="entry name" value="DNA_primase_Znf_CHC2"/>
</dbReference>
<dbReference type="InterPro" id="IPR030846">
    <property type="entry name" value="DnaG_bac"/>
</dbReference>
<dbReference type="InterPro" id="IPR013264">
    <property type="entry name" value="DNAG_N"/>
</dbReference>
<dbReference type="InterPro" id="IPR050219">
    <property type="entry name" value="DnaG_primase"/>
</dbReference>
<dbReference type="InterPro" id="IPR034151">
    <property type="entry name" value="TOPRIM_DnaG_bac"/>
</dbReference>
<dbReference type="InterPro" id="IPR006171">
    <property type="entry name" value="TOPRIM_dom"/>
</dbReference>
<dbReference type="InterPro" id="IPR002694">
    <property type="entry name" value="Znf_CHC2"/>
</dbReference>
<dbReference type="NCBIfam" id="TIGR01391">
    <property type="entry name" value="dnaG"/>
    <property type="match status" value="1"/>
</dbReference>
<dbReference type="PANTHER" id="PTHR30313">
    <property type="entry name" value="DNA PRIMASE"/>
    <property type="match status" value="1"/>
</dbReference>
<dbReference type="PANTHER" id="PTHR30313:SF2">
    <property type="entry name" value="DNA PRIMASE"/>
    <property type="match status" value="1"/>
</dbReference>
<dbReference type="Pfam" id="PF10410">
    <property type="entry name" value="DnaB_bind"/>
    <property type="match status" value="1"/>
</dbReference>
<dbReference type="Pfam" id="PF08278">
    <property type="entry name" value="DnaG_DnaB_bind"/>
    <property type="match status" value="1"/>
</dbReference>
<dbReference type="Pfam" id="PF08275">
    <property type="entry name" value="DNAG_N"/>
    <property type="match status" value="1"/>
</dbReference>
<dbReference type="Pfam" id="PF13155">
    <property type="entry name" value="Toprim_2"/>
    <property type="match status" value="1"/>
</dbReference>
<dbReference type="Pfam" id="PF01807">
    <property type="entry name" value="Zn_ribbon_DnaG"/>
    <property type="match status" value="1"/>
</dbReference>
<dbReference type="PIRSF" id="PIRSF002811">
    <property type="entry name" value="DnaG"/>
    <property type="match status" value="1"/>
</dbReference>
<dbReference type="SMART" id="SM00766">
    <property type="entry name" value="DnaG_DnaB_bind"/>
    <property type="match status" value="1"/>
</dbReference>
<dbReference type="SMART" id="SM00493">
    <property type="entry name" value="TOPRIM"/>
    <property type="match status" value="1"/>
</dbReference>
<dbReference type="SMART" id="SM00400">
    <property type="entry name" value="ZnF_CHCC"/>
    <property type="match status" value="1"/>
</dbReference>
<dbReference type="SUPFAM" id="SSF56731">
    <property type="entry name" value="DNA primase core"/>
    <property type="match status" value="1"/>
</dbReference>
<dbReference type="SUPFAM" id="SSF117023">
    <property type="entry name" value="DNA primase DnaG, C-terminal domain"/>
    <property type="match status" value="1"/>
</dbReference>
<dbReference type="SUPFAM" id="SSF57783">
    <property type="entry name" value="Zinc beta-ribbon"/>
    <property type="match status" value="1"/>
</dbReference>
<dbReference type="PROSITE" id="PS50880">
    <property type="entry name" value="TOPRIM"/>
    <property type="match status" value="1"/>
</dbReference>